<accession>Q90744</accession>
<organism>
    <name type="scientific">Gallus gallus</name>
    <name type="common">Chicken</name>
    <dbReference type="NCBI Taxonomy" id="9031"/>
    <lineage>
        <taxon>Eukaryota</taxon>
        <taxon>Metazoa</taxon>
        <taxon>Chordata</taxon>
        <taxon>Craniata</taxon>
        <taxon>Vertebrata</taxon>
        <taxon>Euteleostomi</taxon>
        <taxon>Archelosauria</taxon>
        <taxon>Archosauria</taxon>
        <taxon>Dinosauria</taxon>
        <taxon>Saurischia</taxon>
        <taxon>Theropoda</taxon>
        <taxon>Coelurosauria</taxon>
        <taxon>Aves</taxon>
        <taxon>Neognathae</taxon>
        <taxon>Galloanserae</taxon>
        <taxon>Galliformes</taxon>
        <taxon>Phasianidae</taxon>
        <taxon>Phasianinae</taxon>
        <taxon>Gallus</taxon>
    </lineage>
</organism>
<comment type="function">
    <text evidence="1">Removes terminal alpha-N-acetylgalactosamine residues from glycolipids and glycopeptides. Required for the breakdown of glycolipids.</text>
</comment>
<comment type="catalytic activity">
    <reaction>
        <text>Cleavage of non-reducing alpha-(1-&gt;3)-N-acetylgalactosamine residues from human blood group A and AB mucin glycoproteins, Forssman hapten and blood group A lacto series glycolipids.</text>
        <dbReference type="EC" id="3.2.1.49"/>
    </reaction>
</comment>
<comment type="catalytic activity">
    <reaction evidence="1">
        <text>a neolactoside IV(3)-alpha-GalNAc,IV(2)-alpha-Fuc-nLc4Cer(d18:1(4E)) + H2O = a neolactoside IV(2)-alpha-Fuc-nLc4Cer(d18:1(4E)) + N-acetyl-alpha-D-galactosamine</text>
        <dbReference type="Rhea" id="RHEA:48212"/>
        <dbReference type="ChEBI" id="CHEBI:15377"/>
        <dbReference type="ChEBI" id="CHEBI:28471"/>
        <dbReference type="ChEBI" id="CHEBI:28691"/>
        <dbReference type="ChEBI" id="CHEBI:40356"/>
    </reaction>
    <physiologicalReaction direction="left-to-right" evidence="1">
        <dbReference type="Rhea" id="RHEA:48213"/>
    </physiologicalReaction>
</comment>
<comment type="catalytic activity">
    <reaction evidence="1">
        <text>a neolactoside IV(3)-alpha-GalNAc,IV(2)-alpha-Fuc-nLc4Cer(d18:0) + H2O = a neolactoside IV(2)-alpha-Fuc-nLc4Cer(d18:0) + N-acetyl-alpha-D-galactosamine</text>
        <dbReference type="Rhea" id="RHEA:49304"/>
        <dbReference type="ChEBI" id="CHEBI:15377"/>
        <dbReference type="ChEBI" id="CHEBI:40356"/>
        <dbReference type="ChEBI" id="CHEBI:91118"/>
        <dbReference type="ChEBI" id="CHEBI:91119"/>
    </reaction>
    <physiologicalReaction direction="left-to-right" evidence="1">
        <dbReference type="Rhea" id="RHEA:49305"/>
    </physiologicalReaction>
</comment>
<comment type="catalytic activity">
    <reaction evidence="1">
        <text>a globoside IV3GalNAc-Gb4Cer + H2O = N-acetyl-alpha-D-galactosamine + a globoside Gb4Cer</text>
        <dbReference type="Rhea" id="RHEA:48412"/>
        <dbReference type="ChEBI" id="CHEBI:15377"/>
        <dbReference type="ChEBI" id="CHEBI:40356"/>
        <dbReference type="ChEBI" id="CHEBI:88167"/>
        <dbReference type="ChEBI" id="CHEBI:90400"/>
    </reaction>
    <physiologicalReaction direction="left-to-right" evidence="1">
        <dbReference type="Rhea" id="RHEA:48413"/>
    </physiologicalReaction>
</comment>
<comment type="subunit">
    <text evidence="2">Homodimer.</text>
</comment>
<comment type="subcellular location">
    <subcellularLocation>
        <location evidence="1">Lysosome</location>
    </subcellularLocation>
</comment>
<comment type="similarity">
    <text evidence="3">Belongs to the glycosyl hydrolase 27 family.</text>
</comment>
<keyword id="KW-0002">3D-structure</keyword>
<keyword id="KW-0903">Direct protein sequencing</keyword>
<keyword id="KW-1015">Disulfide bond</keyword>
<keyword id="KW-0325">Glycoprotein</keyword>
<keyword id="KW-0326">Glycosidase</keyword>
<keyword id="KW-0378">Hydrolase</keyword>
<keyword id="KW-0443">Lipid metabolism</keyword>
<keyword id="KW-0458">Lysosome</keyword>
<keyword id="KW-1185">Reference proteome</keyword>
<proteinExistence type="evidence at protein level"/>
<reference key="1">
    <citation type="journal article" date="1993" name="Biochim. Biophys. Acta">
        <title>Cloning and sequence of a chicken alpha-N-acetylgalactosamindase gene.</title>
        <authorList>
            <person name="Davis M.O."/>
            <person name="Hata J."/>
            <person name="Smith D."/>
            <person name="Walker J.C."/>
        </authorList>
    </citation>
    <scope>NUCLEOTIDE SEQUENCE [MRNA]</scope>
    <scope>PARTIAL PROTEIN SEQUENCE</scope>
    <source>
        <tissue>Liver</tissue>
    </source>
</reference>
<reference key="2">
    <citation type="journal article" date="2002" name="Structure">
        <title>The 1.9 A structure of alpha-N-acetylgalactosaminidase: molecular basis of glycosidase deficiency diseases.</title>
        <authorList>
            <person name="Garman S.C."/>
            <person name="Hannick L."/>
            <person name="Zhu A."/>
            <person name="Garboczi D.N."/>
        </authorList>
    </citation>
    <scope>X-RAY CRYSTALLOGRAPHY (1.9 ANGSTROMS) IN COMPLEX WITH N-ACETYLGALACTOSAMINE</scope>
    <scope>GLYCOSYLATION AT ASN-161; ASN-185 AND ASN-369</scope>
    <scope>SUBUNIT</scope>
    <scope>DISULFIDE BONDS</scope>
</reference>
<gene>
    <name type="primary">NAGA</name>
</gene>
<feature type="chain" id="PRO_0000001021" description="Alpha-N-acetylgalactosaminidase">
    <location>
        <begin position="1"/>
        <end position="405"/>
    </location>
</feature>
<feature type="active site" description="Nucleophile">
    <location>
        <position position="140"/>
    </location>
</feature>
<feature type="active site" description="Proton donor">
    <location>
        <position position="201"/>
    </location>
</feature>
<feature type="binding site">
    <location>
        <begin position="61"/>
        <end position="62"/>
    </location>
    <ligand>
        <name>substrate</name>
    </ligand>
</feature>
<feature type="binding site">
    <location>
        <position position="138"/>
    </location>
    <ligand>
        <name>substrate</name>
    </ligand>
</feature>
<feature type="binding site">
    <location>
        <position position="172"/>
    </location>
    <ligand>
        <name>substrate</name>
    </ligand>
</feature>
<feature type="binding site">
    <location>
        <position position="197"/>
    </location>
    <ligand>
        <name>substrate</name>
    </ligand>
</feature>
<feature type="binding site">
    <location>
        <position position="201"/>
    </location>
    <ligand>
        <name>substrate</name>
    </ligand>
</feature>
<feature type="glycosylation site" description="N-linked (GlcNAc...) asparagine" evidence="2">
    <location>
        <position position="161"/>
    </location>
</feature>
<feature type="glycosylation site" description="N-linked (GlcNAc...) asparagine" evidence="2">
    <location>
        <position position="185"/>
    </location>
</feature>
<feature type="glycosylation site" description="N-linked (GlcNAc...) asparagine" evidence="2">
    <location>
        <position position="369"/>
    </location>
</feature>
<feature type="disulfide bond" evidence="2">
    <location>
        <begin position="21"/>
        <end position="63"/>
    </location>
</feature>
<feature type="disulfide bond" evidence="2">
    <location>
        <begin position="25"/>
        <end position="32"/>
    </location>
</feature>
<feature type="disulfide bond" evidence="2">
    <location>
        <begin position="111"/>
        <end position="142"/>
    </location>
</feature>
<feature type="disulfide bond" evidence="2">
    <location>
        <begin position="171"/>
        <end position="193"/>
    </location>
</feature>
<feature type="strand" evidence="4">
    <location>
        <begin position="11"/>
        <end position="15"/>
    </location>
</feature>
<feature type="helix" evidence="4">
    <location>
        <begin position="16"/>
        <end position="19"/>
    </location>
</feature>
<feature type="turn" evidence="4">
    <location>
        <begin position="25"/>
        <end position="27"/>
    </location>
</feature>
<feature type="turn" evidence="4">
    <location>
        <begin position="29"/>
        <end position="31"/>
    </location>
</feature>
<feature type="strand" evidence="4">
    <location>
        <begin position="32"/>
        <end position="34"/>
    </location>
</feature>
<feature type="helix" evidence="4">
    <location>
        <begin position="35"/>
        <end position="47"/>
    </location>
</feature>
<feature type="helix" evidence="4">
    <location>
        <begin position="51"/>
        <end position="53"/>
    </location>
</feature>
<feature type="strand" evidence="4">
    <location>
        <begin position="57"/>
        <end position="59"/>
    </location>
</feature>
<feature type="turn" evidence="4">
    <location>
        <begin position="79"/>
        <end position="81"/>
    </location>
</feature>
<feature type="helix" evidence="4">
    <location>
        <begin position="85"/>
        <end position="94"/>
    </location>
</feature>
<feature type="turn" evidence="4">
    <location>
        <begin position="95"/>
        <end position="97"/>
    </location>
</feature>
<feature type="strand" evidence="4">
    <location>
        <begin position="99"/>
        <end position="109"/>
    </location>
</feature>
<feature type="strand" evidence="4">
    <location>
        <begin position="113"/>
        <end position="115"/>
    </location>
</feature>
<feature type="helix" evidence="4">
    <location>
        <begin position="119"/>
        <end position="121"/>
    </location>
</feature>
<feature type="helix" evidence="4">
    <location>
        <begin position="122"/>
        <end position="132"/>
    </location>
</feature>
<feature type="strand" evidence="4">
    <location>
        <begin position="136"/>
        <end position="140"/>
    </location>
</feature>
<feature type="helix" evidence="4">
    <location>
        <begin position="146"/>
        <end position="162"/>
    </location>
</feature>
<feature type="strand" evidence="4">
    <location>
        <begin position="168"/>
        <end position="171"/>
    </location>
</feature>
<feature type="helix" evidence="4">
    <location>
        <begin position="173"/>
        <end position="176"/>
    </location>
</feature>
<feature type="turn" evidence="4">
    <location>
        <begin position="181"/>
        <end position="183"/>
    </location>
</feature>
<feature type="helix" evidence="4">
    <location>
        <begin position="186"/>
        <end position="192"/>
    </location>
</feature>
<feature type="strand" evidence="4">
    <location>
        <begin position="194"/>
        <end position="197"/>
    </location>
</feature>
<feature type="helix" evidence="4">
    <location>
        <begin position="206"/>
        <end position="218"/>
    </location>
</feature>
<feature type="helix" evidence="4">
    <location>
        <begin position="220"/>
        <end position="222"/>
    </location>
</feature>
<feature type="helix" evidence="4">
    <location>
        <begin position="224"/>
        <end position="226"/>
    </location>
</feature>
<feature type="strand" evidence="4">
    <location>
        <begin position="231"/>
        <end position="234"/>
    </location>
</feature>
<feature type="strand" evidence="4">
    <location>
        <begin position="242"/>
        <end position="244"/>
    </location>
</feature>
<feature type="helix" evidence="4">
    <location>
        <begin position="247"/>
        <end position="259"/>
    </location>
</feature>
<feature type="strand" evidence="4">
    <location>
        <begin position="264"/>
        <end position="266"/>
    </location>
</feature>
<feature type="turn" evidence="4">
    <location>
        <begin position="270"/>
        <end position="272"/>
    </location>
</feature>
<feature type="helix" evidence="4">
    <location>
        <begin position="275"/>
        <end position="281"/>
    </location>
</feature>
<feature type="helix" evidence="4">
    <location>
        <begin position="284"/>
        <end position="290"/>
    </location>
</feature>
<feature type="strand" evidence="4">
    <location>
        <begin position="299"/>
        <end position="303"/>
    </location>
</feature>
<feature type="strand" evidence="4">
    <location>
        <begin position="307"/>
        <end position="314"/>
    </location>
</feature>
<feature type="strand" evidence="4">
    <location>
        <begin position="320"/>
        <end position="326"/>
    </location>
</feature>
<feature type="strand" evidence="4">
    <location>
        <begin position="329"/>
        <end position="331"/>
    </location>
</feature>
<feature type="strand" evidence="4">
    <location>
        <begin position="333"/>
        <end position="338"/>
    </location>
</feature>
<feature type="helix" evidence="4">
    <location>
        <begin position="339"/>
        <end position="342"/>
    </location>
</feature>
<feature type="strand" evidence="4">
    <location>
        <begin position="349"/>
        <end position="354"/>
    </location>
</feature>
<feature type="turn" evidence="4">
    <location>
        <begin position="355"/>
        <end position="357"/>
    </location>
</feature>
<feature type="strand" evidence="4">
    <location>
        <begin position="360"/>
        <end position="365"/>
    </location>
</feature>
<feature type="strand" evidence="4">
    <location>
        <begin position="368"/>
        <end position="374"/>
    </location>
</feature>
<feature type="strand" evidence="4">
    <location>
        <begin position="379"/>
        <end position="386"/>
    </location>
</feature>
<name>NAGAB_CHICK</name>
<sequence length="405" mass="45615">LENGLARTPPMGWLAWERFRCNVNCREDPRQCISEMLFMEMADRIAEDGWRELGYKYINIDDCWAAKQRDAEGRLVPDPERFPRGIKALADYVHARGLKLDIYGDLGRLTCGGYPGTTLDRVEQDAQTFAEWGVDMLKLDGCYSSGKEQAQGYPQMARALNSTGRPIVYSCSWPAYQGGLPPKVNYTLLGEICNLWRNYDDIQDSWDSVLSIVDWFFTNQDVLQPFAGPGHWNDPDMLIIGNFGLSYEQSRSQMALWTIMAAPLLMSTDLRTISPSAKKILQNRLMIQINQDPLGIQGRRIIKEGSHIEVFLRPLSQAASALVFFSRRTDMPFRYTTSLAKLGFPMGAAYEVQDVYSGKIISGLKTGDNFTVIINPSGVVMWYLCPKALLIQQQAPGGPSRLPLL</sequence>
<dbReference type="EC" id="3.2.1.49"/>
<dbReference type="EMBL" id="L18754">
    <property type="protein sequence ID" value="AAA16614.1"/>
    <property type="molecule type" value="mRNA"/>
</dbReference>
<dbReference type="PIR" id="S45522">
    <property type="entry name" value="S45522"/>
</dbReference>
<dbReference type="PDB" id="1KTB">
    <property type="method" value="X-ray"/>
    <property type="resolution" value="1.90 A"/>
    <property type="chains" value="A=1-405"/>
</dbReference>
<dbReference type="PDB" id="1KTC">
    <property type="method" value="X-ray"/>
    <property type="resolution" value="2.40 A"/>
    <property type="chains" value="A=1-405"/>
</dbReference>
<dbReference type="PDBsum" id="1KTB"/>
<dbReference type="PDBsum" id="1KTC"/>
<dbReference type="SMR" id="Q90744"/>
<dbReference type="FunCoup" id="Q90744">
    <property type="interactions" value="503"/>
</dbReference>
<dbReference type="STRING" id="9031.ENSGALP00000019396"/>
<dbReference type="ChEMBL" id="CHEMBL5655"/>
<dbReference type="CAZy" id="GH27">
    <property type="family name" value="Glycoside Hydrolase Family 27"/>
</dbReference>
<dbReference type="GlyCosmos" id="Q90744">
    <property type="glycosylation" value="3 sites, No reported glycans"/>
</dbReference>
<dbReference type="GlyGen" id="Q90744">
    <property type="glycosylation" value="3 sites"/>
</dbReference>
<dbReference type="iPTMnet" id="Q90744"/>
<dbReference type="PaxDb" id="9031-ENSGALP00000019396"/>
<dbReference type="VEuPathDB" id="HostDB:geneid_396547"/>
<dbReference type="eggNOG" id="KOG2366">
    <property type="taxonomic scope" value="Eukaryota"/>
</dbReference>
<dbReference type="InParanoid" id="Q90744"/>
<dbReference type="OrthoDB" id="5795902at2759"/>
<dbReference type="PhylomeDB" id="Q90744"/>
<dbReference type="EvolutionaryTrace" id="Q90744"/>
<dbReference type="Proteomes" id="UP000000539">
    <property type="component" value="Unassembled WGS sequence"/>
</dbReference>
<dbReference type="GO" id="GO:0005737">
    <property type="term" value="C:cytoplasm"/>
    <property type="evidence" value="ECO:0000318"/>
    <property type="project" value="GO_Central"/>
</dbReference>
<dbReference type="GO" id="GO:0005764">
    <property type="term" value="C:lysosome"/>
    <property type="evidence" value="ECO:0007669"/>
    <property type="project" value="UniProtKB-SubCell"/>
</dbReference>
<dbReference type="GO" id="GO:0004557">
    <property type="term" value="F:alpha-galactosidase activity"/>
    <property type="evidence" value="ECO:0000318"/>
    <property type="project" value="GO_Central"/>
</dbReference>
<dbReference type="GO" id="GO:0008456">
    <property type="term" value="F:alpha-N-acetylgalactosaminidase activity"/>
    <property type="evidence" value="ECO:0007669"/>
    <property type="project" value="UniProtKB-EC"/>
</dbReference>
<dbReference type="GO" id="GO:0016139">
    <property type="term" value="P:glycoside catabolic process"/>
    <property type="evidence" value="ECO:0000318"/>
    <property type="project" value="GO_Central"/>
</dbReference>
<dbReference type="GO" id="GO:0006629">
    <property type="term" value="P:lipid metabolic process"/>
    <property type="evidence" value="ECO:0007669"/>
    <property type="project" value="UniProtKB-KW"/>
</dbReference>
<dbReference type="GO" id="GO:0009311">
    <property type="term" value="P:oligosaccharide metabolic process"/>
    <property type="evidence" value="ECO:0000318"/>
    <property type="project" value="GO_Central"/>
</dbReference>
<dbReference type="CDD" id="cd14792">
    <property type="entry name" value="GH27"/>
    <property type="match status" value="1"/>
</dbReference>
<dbReference type="FunFam" id="2.60.40.1180:FF:000025">
    <property type="entry name" value="Alpha-galactosidase"/>
    <property type="match status" value="1"/>
</dbReference>
<dbReference type="FunFam" id="3.20.20.70:FF:000070">
    <property type="entry name" value="Alpha-galactosidase"/>
    <property type="match status" value="1"/>
</dbReference>
<dbReference type="Gene3D" id="3.20.20.70">
    <property type="entry name" value="Aldolase class I"/>
    <property type="match status" value="1"/>
</dbReference>
<dbReference type="Gene3D" id="2.60.40.1180">
    <property type="entry name" value="Golgi alpha-mannosidase II"/>
    <property type="match status" value="1"/>
</dbReference>
<dbReference type="InterPro" id="IPR013785">
    <property type="entry name" value="Aldolase_TIM"/>
</dbReference>
<dbReference type="InterPro" id="IPR002241">
    <property type="entry name" value="Glyco_hydro_27"/>
</dbReference>
<dbReference type="InterPro" id="IPR000111">
    <property type="entry name" value="Glyco_hydro_27/36_CS"/>
</dbReference>
<dbReference type="InterPro" id="IPR013780">
    <property type="entry name" value="Glyco_hydro_b"/>
</dbReference>
<dbReference type="InterPro" id="IPR017853">
    <property type="entry name" value="Glycoside_hydrolase_SF"/>
</dbReference>
<dbReference type="InterPro" id="IPR035373">
    <property type="entry name" value="Melibiase/NAGA_C"/>
</dbReference>
<dbReference type="PANTHER" id="PTHR11452">
    <property type="entry name" value="ALPHA-GALACTOSIDASE/ALPHA-N-ACETYLGALACTOSAMINIDASE"/>
    <property type="match status" value="1"/>
</dbReference>
<dbReference type="PANTHER" id="PTHR11452:SF25">
    <property type="entry name" value="ALPHA-N-ACETYLGALACTOSAMINIDASE"/>
    <property type="match status" value="1"/>
</dbReference>
<dbReference type="Pfam" id="PF16499">
    <property type="entry name" value="Melibiase_2"/>
    <property type="match status" value="1"/>
</dbReference>
<dbReference type="Pfam" id="PF17450">
    <property type="entry name" value="Melibiase_2_C"/>
    <property type="match status" value="1"/>
</dbReference>
<dbReference type="PRINTS" id="PR00740">
    <property type="entry name" value="GLHYDRLASE27"/>
</dbReference>
<dbReference type="SUPFAM" id="SSF51445">
    <property type="entry name" value="(Trans)glycosidases"/>
    <property type="match status" value="1"/>
</dbReference>
<dbReference type="SUPFAM" id="SSF51011">
    <property type="entry name" value="Glycosyl hydrolase domain"/>
    <property type="match status" value="1"/>
</dbReference>
<dbReference type="PROSITE" id="PS00512">
    <property type="entry name" value="ALPHA_GALACTOSIDASE"/>
    <property type="match status" value="1"/>
</dbReference>
<protein>
    <recommendedName>
        <fullName>Alpha-N-acetylgalactosaminidase</fullName>
        <ecNumber>3.2.1.49</ecNumber>
    </recommendedName>
    <alternativeName>
        <fullName>Alpha-galactosidase B</fullName>
    </alternativeName>
</protein>
<evidence type="ECO:0000250" key="1">
    <source>
        <dbReference type="UniProtKB" id="P17050"/>
    </source>
</evidence>
<evidence type="ECO:0000269" key="2">
    <source>
    </source>
</evidence>
<evidence type="ECO:0000305" key="3"/>
<evidence type="ECO:0007829" key="4">
    <source>
        <dbReference type="PDB" id="1KTB"/>
    </source>
</evidence>